<evidence type="ECO:0000255" key="1">
    <source>
        <dbReference type="HAMAP-Rule" id="MF_00291"/>
    </source>
</evidence>
<evidence type="ECO:0000256" key="2">
    <source>
        <dbReference type="SAM" id="MobiDB-lite"/>
    </source>
</evidence>
<evidence type="ECO:0000305" key="3"/>
<sequence>MSVISMKNLLETGVHFGHQTRKWNPKMAPYVFTARNGIHIIDLQKTVQKAKEAYDALKKLTSEGKKVLFVGTKKQARGAIEREAIRSNMFFINNRWPGGLLTNWNTVKRSIARLKKLEGMEADNSFEKEVKTKKEVLTLRRELEKLRKTLGGIKDMATIPEIMFVIDPKKEEIAVKEARKLGLKIFAVVDTNCDPELIDYPIPGNDDAIRAISLFLETMSNAVIEGTGGVVEQPRFSEDLDSEALALEYQGEYDESGKFIMDEDPDSKKTKTAEEPSATIEPSTTTTVEVDQNE</sequence>
<protein>
    <recommendedName>
        <fullName evidence="1">Small ribosomal subunit protein uS2</fullName>
    </recommendedName>
    <alternativeName>
        <fullName evidence="3">30S ribosomal protein S2</fullName>
    </alternativeName>
</protein>
<keyword id="KW-1185">Reference proteome</keyword>
<keyword id="KW-0687">Ribonucleoprotein</keyword>
<keyword id="KW-0689">Ribosomal protein</keyword>
<proteinExistence type="inferred from homology"/>
<feature type="chain" id="PRO_0000134189" description="Small ribosomal subunit protein uS2">
    <location>
        <begin position="1"/>
        <end position="294"/>
    </location>
</feature>
<feature type="region of interest" description="Disordered" evidence="2">
    <location>
        <begin position="256"/>
        <end position="294"/>
    </location>
</feature>
<feature type="compositionally biased region" description="Basic and acidic residues" evidence="2">
    <location>
        <begin position="256"/>
        <end position="274"/>
    </location>
</feature>
<feature type="compositionally biased region" description="Polar residues" evidence="2">
    <location>
        <begin position="280"/>
        <end position="294"/>
    </location>
</feature>
<comment type="similarity">
    <text evidence="1">Belongs to the universal ribosomal protein uS2 family.</text>
</comment>
<comment type="sequence caution" evidence="3">
    <conflict type="erroneous initiation">
        <sequence resource="EMBL-CDS" id="AAN50496"/>
    </conflict>
    <text>Truncated N-terminus.</text>
</comment>
<gene>
    <name evidence="1" type="primary">rpsB</name>
    <name type="ordered locus">LA_3298</name>
</gene>
<reference key="1">
    <citation type="journal article" date="2003" name="Nature">
        <title>Unique physiological and pathogenic features of Leptospira interrogans revealed by whole-genome sequencing.</title>
        <authorList>
            <person name="Ren S.-X."/>
            <person name="Fu G."/>
            <person name="Jiang X.-G."/>
            <person name="Zeng R."/>
            <person name="Miao Y.-G."/>
            <person name="Xu H."/>
            <person name="Zhang Y.-X."/>
            <person name="Xiong H."/>
            <person name="Lu G."/>
            <person name="Lu L.-F."/>
            <person name="Jiang H.-Q."/>
            <person name="Jia J."/>
            <person name="Tu Y.-F."/>
            <person name="Jiang J.-X."/>
            <person name="Gu W.-Y."/>
            <person name="Zhang Y.-Q."/>
            <person name="Cai Z."/>
            <person name="Sheng H.-H."/>
            <person name="Yin H.-F."/>
            <person name="Zhang Y."/>
            <person name="Zhu G.-F."/>
            <person name="Wan M."/>
            <person name="Huang H.-L."/>
            <person name="Qian Z."/>
            <person name="Wang S.-Y."/>
            <person name="Ma W."/>
            <person name="Yao Z.-J."/>
            <person name="Shen Y."/>
            <person name="Qiang B.-Q."/>
            <person name="Xia Q.-C."/>
            <person name="Guo X.-K."/>
            <person name="Danchin A."/>
            <person name="Saint Girons I."/>
            <person name="Somerville R.L."/>
            <person name="Wen Y.-M."/>
            <person name="Shi M.-H."/>
            <person name="Chen Z."/>
            <person name="Xu J.-G."/>
            <person name="Zhao G.-P."/>
        </authorList>
    </citation>
    <scope>NUCLEOTIDE SEQUENCE [LARGE SCALE GENOMIC DNA]</scope>
    <source>
        <strain>56601</strain>
    </source>
</reference>
<accession>Q8F140</accession>
<organism>
    <name type="scientific">Leptospira interrogans serogroup Icterohaemorrhagiae serovar Lai (strain 56601)</name>
    <dbReference type="NCBI Taxonomy" id="189518"/>
    <lineage>
        <taxon>Bacteria</taxon>
        <taxon>Pseudomonadati</taxon>
        <taxon>Spirochaetota</taxon>
        <taxon>Spirochaetia</taxon>
        <taxon>Leptospirales</taxon>
        <taxon>Leptospiraceae</taxon>
        <taxon>Leptospira</taxon>
    </lineage>
</organism>
<name>RS2_LEPIN</name>
<dbReference type="EMBL" id="AE010300">
    <property type="protein sequence ID" value="AAN50496.2"/>
    <property type="status" value="ALT_INIT"/>
    <property type="molecule type" value="Genomic_DNA"/>
</dbReference>
<dbReference type="RefSeq" id="NP_713478.2">
    <property type="nucleotide sequence ID" value="NC_004342.2"/>
</dbReference>
<dbReference type="RefSeq" id="WP_000111480.1">
    <property type="nucleotide sequence ID" value="NC_004342.2"/>
</dbReference>
<dbReference type="SMR" id="Q8F140"/>
<dbReference type="FunCoup" id="Q8F140">
    <property type="interactions" value="607"/>
</dbReference>
<dbReference type="STRING" id="189518.LA_3298"/>
<dbReference type="PaxDb" id="189518-LA_3298"/>
<dbReference type="EnsemblBacteria" id="AAN50496">
    <property type="protein sequence ID" value="AAN50496"/>
    <property type="gene ID" value="LA_3298"/>
</dbReference>
<dbReference type="GeneID" id="61144182"/>
<dbReference type="KEGG" id="lil:LA_3298"/>
<dbReference type="PATRIC" id="fig|189518.3.peg.3268"/>
<dbReference type="HOGENOM" id="CLU_040318_1_0_12"/>
<dbReference type="InParanoid" id="Q8F140"/>
<dbReference type="OrthoDB" id="9808036at2"/>
<dbReference type="Proteomes" id="UP000001408">
    <property type="component" value="Chromosome I"/>
</dbReference>
<dbReference type="GO" id="GO:0022627">
    <property type="term" value="C:cytosolic small ribosomal subunit"/>
    <property type="evidence" value="ECO:0000318"/>
    <property type="project" value="GO_Central"/>
</dbReference>
<dbReference type="GO" id="GO:0003735">
    <property type="term" value="F:structural constituent of ribosome"/>
    <property type="evidence" value="ECO:0000318"/>
    <property type="project" value="GO_Central"/>
</dbReference>
<dbReference type="GO" id="GO:0006412">
    <property type="term" value="P:translation"/>
    <property type="evidence" value="ECO:0007669"/>
    <property type="project" value="UniProtKB-UniRule"/>
</dbReference>
<dbReference type="CDD" id="cd01425">
    <property type="entry name" value="RPS2"/>
    <property type="match status" value="1"/>
</dbReference>
<dbReference type="FunFam" id="1.10.287.610:FF:000001">
    <property type="entry name" value="30S ribosomal protein S2"/>
    <property type="match status" value="1"/>
</dbReference>
<dbReference type="Gene3D" id="3.40.50.10490">
    <property type="entry name" value="Glucose-6-phosphate isomerase like protein, domain 1"/>
    <property type="match status" value="1"/>
</dbReference>
<dbReference type="Gene3D" id="1.10.287.610">
    <property type="entry name" value="Helix hairpin bin"/>
    <property type="match status" value="1"/>
</dbReference>
<dbReference type="HAMAP" id="MF_00291_B">
    <property type="entry name" value="Ribosomal_uS2_B"/>
    <property type="match status" value="1"/>
</dbReference>
<dbReference type="InterPro" id="IPR001865">
    <property type="entry name" value="Ribosomal_uS2"/>
</dbReference>
<dbReference type="InterPro" id="IPR005706">
    <property type="entry name" value="Ribosomal_uS2_bac/mit/plastid"/>
</dbReference>
<dbReference type="InterPro" id="IPR018130">
    <property type="entry name" value="Ribosomal_uS2_CS"/>
</dbReference>
<dbReference type="InterPro" id="IPR023591">
    <property type="entry name" value="Ribosomal_uS2_flav_dom_sf"/>
</dbReference>
<dbReference type="NCBIfam" id="TIGR01011">
    <property type="entry name" value="rpsB_bact"/>
    <property type="match status" value="1"/>
</dbReference>
<dbReference type="PANTHER" id="PTHR12534">
    <property type="entry name" value="30S RIBOSOMAL PROTEIN S2 PROKARYOTIC AND ORGANELLAR"/>
    <property type="match status" value="1"/>
</dbReference>
<dbReference type="PANTHER" id="PTHR12534:SF0">
    <property type="entry name" value="SMALL RIBOSOMAL SUBUNIT PROTEIN US2M"/>
    <property type="match status" value="1"/>
</dbReference>
<dbReference type="Pfam" id="PF00318">
    <property type="entry name" value="Ribosomal_S2"/>
    <property type="match status" value="1"/>
</dbReference>
<dbReference type="PRINTS" id="PR00395">
    <property type="entry name" value="RIBOSOMALS2"/>
</dbReference>
<dbReference type="SUPFAM" id="SSF52313">
    <property type="entry name" value="Ribosomal protein S2"/>
    <property type="match status" value="1"/>
</dbReference>
<dbReference type="PROSITE" id="PS00962">
    <property type="entry name" value="RIBOSOMAL_S2_1"/>
    <property type="match status" value="1"/>
</dbReference>